<evidence type="ECO:0000255" key="1">
    <source>
        <dbReference type="HAMAP-Rule" id="MF_01201"/>
    </source>
</evidence>
<gene>
    <name type="primary">alr</name>
    <name type="ordered locus">Asuc_1426</name>
</gene>
<comment type="function">
    <text evidence="1">Catalyzes the interconversion of L-alanine and D-alanine. May also act on other amino acids.</text>
</comment>
<comment type="catalytic activity">
    <reaction evidence="1">
        <text>L-alanine = D-alanine</text>
        <dbReference type="Rhea" id="RHEA:20249"/>
        <dbReference type="ChEBI" id="CHEBI:57416"/>
        <dbReference type="ChEBI" id="CHEBI:57972"/>
        <dbReference type="EC" id="5.1.1.1"/>
    </reaction>
</comment>
<comment type="cofactor">
    <cofactor evidence="1">
        <name>pyridoxal 5'-phosphate</name>
        <dbReference type="ChEBI" id="CHEBI:597326"/>
    </cofactor>
</comment>
<comment type="pathway">
    <text evidence="1">Amino-acid biosynthesis; D-alanine biosynthesis; D-alanine from L-alanine: step 1/1.</text>
</comment>
<comment type="similarity">
    <text evidence="1">Belongs to the alanine racemase family.</text>
</comment>
<accession>A6VP88</accession>
<proteinExistence type="inferred from homology"/>
<organism>
    <name type="scientific">Actinobacillus succinogenes (strain ATCC 55618 / DSM 22257 / CCUG 43843 / 130Z)</name>
    <dbReference type="NCBI Taxonomy" id="339671"/>
    <lineage>
        <taxon>Bacteria</taxon>
        <taxon>Pseudomonadati</taxon>
        <taxon>Pseudomonadota</taxon>
        <taxon>Gammaproteobacteria</taxon>
        <taxon>Pasteurellales</taxon>
        <taxon>Pasteurellaceae</taxon>
        <taxon>Actinobacillus</taxon>
    </lineage>
</organism>
<dbReference type="EC" id="5.1.1.1" evidence="1"/>
<dbReference type="EMBL" id="CP000746">
    <property type="protein sequence ID" value="ABR74785.1"/>
    <property type="molecule type" value="Genomic_DNA"/>
</dbReference>
<dbReference type="RefSeq" id="WP_012073162.1">
    <property type="nucleotide sequence ID" value="NC_009655.1"/>
</dbReference>
<dbReference type="SMR" id="A6VP88"/>
<dbReference type="STRING" id="339671.Asuc_1426"/>
<dbReference type="KEGG" id="asu:Asuc_1426"/>
<dbReference type="eggNOG" id="COG0787">
    <property type="taxonomic scope" value="Bacteria"/>
</dbReference>
<dbReference type="HOGENOM" id="CLU_028393_1_0_6"/>
<dbReference type="OrthoDB" id="9813814at2"/>
<dbReference type="UniPathway" id="UPA00042">
    <property type="reaction ID" value="UER00497"/>
</dbReference>
<dbReference type="Proteomes" id="UP000001114">
    <property type="component" value="Chromosome"/>
</dbReference>
<dbReference type="GO" id="GO:0005829">
    <property type="term" value="C:cytosol"/>
    <property type="evidence" value="ECO:0007669"/>
    <property type="project" value="TreeGrafter"/>
</dbReference>
<dbReference type="GO" id="GO:0008784">
    <property type="term" value="F:alanine racemase activity"/>
    <property type="evidence" value="ECO:0007669"/>
    <property type="project" value="UniProtKB-UniRule"/>
</dbReference>
<dbReference type="GO" id="GO:0030170">
    <property type="term" value="F:pyridoxal phosphate binding"/>
    <property type="evidence" value="ECO:0007669"/>
    <property type="project" value="UniProtKB-UniRule"/>
</dbReference>
<dbReference type="GO" id="GO:0030632">
    <property type="term" value="P:D-alanine biosynthetic process"/>
    <property type="evidence" value="ECO:0007669"/>
    <property type="project" value="UniProtKB-UniRule"/>
</dbReference>
<dbReference type="CDD" id="cd06827">
    <property type="entry name" value="PLPDE_III_AR_proteobact"/>
    <property type="match status" value="1"/>
</dbReference>
<dbReference type="FunFam" id="2.40.37.10:FF:000002">
    <property type="entry name" value="Alanine racemase"/>
    <property type="match status" value="1"/>
</dbReference>
<dbReference type="FunFam" id="3.20.20.10:FF:000002">
    <property type="entry name" value="Alanine racemase"/>
    <property type="match status" value="1"/>
</dbReference>
<dbReference type="Gene3D" id="3.20.20.10">
    <property type="entry name" value="Alanine racemase"/>
    <property type="match status" value="1"/>
</dbReference>
<dbReference type="Gene3D" id="2.40.37.10">
    <property type="entry name" value="Lyase, Ornithine Decarboxylase, Chain A, domain 1"/>
    <property type="match status" value="1"/>
</dbReference>
<dbReference type="HAMAP" id="MF_01201">
    <property type="entry name" value="Ala_racemase"/>
    <property type="match status" value="1"/>
</dbReference>
<dbReference type="InterPro" id="IPR000821">
    <property type="entry name" value="Ala_racemase"/>
</dbReference>
<dbReference type="InterPro" id="IPR009006">
    <property type="entry name" value="Ala_racemase/Decarboxylase_C"/>
</dbReference>
<dbReference type="InterPro" id="IPR011079">
    <property type="entry name" value="Ala_racemase_C"/>
</dbReference>
<dbReference type="InterPro" id="IPR001608">
    <property type="entry name" value="Ala_racemase_N"/>
</dbReference>
<dbReference type="InterPro" id="IPR020622">
    <property type="entry name" value="Ala_racemase_pyridoxalP-BS"/>
</dbReference>
<dbReference type="InterPro" id="IPR029066">
    <property type="entry name" value="PLP-binding_barrel"/>
</dbReference>
<dbReference type="NCBIfam" id="TIGR00492">
    <property type="entry name" value="alr"/>
    <property type="match status" value="1"/>
</dbReference>
<dbReference type="PANTHER" id="PTHR30511">
    <property type="entry name" value="ALANINE RACEMASE"/>
    <property type="match status" value="1"/>
</dbReference>
<dbReference type="PANTHER" id="PTHR30511:SF4">
    <property type="entry name" value="ALANINE RACEMASE, BIOSYNTHETIC"/>
    <property type="match status" value="1"/>
</dbReference>
<dbReference type="Pfam" id="PF00842">
    <property type="entry name" value="Ala_racemase_C"/>
    <property type="match status" value="1"/>
</dbReference>
<dbReference type="Pfam" id="PF01168">
    <property type="entry name" value="Ala_racemase_N"/>
    <property type="match status" value="1"/>
</dbReference>
<dbReference type="PRINTS" id="PR00992">
    <property type="entry name" value="ALARACEMASE"/>
</dbReference>
<dbReference type="SMART" id="SM01005">
    <property type="entry name" value="Ala_racemase_C"/>
    <property type="match status" value="1"/>
</dbReference>
<dbReference type="SUPFAM" id="SSF50621">
    <property type="entry name" value="Alanine racemase C-terminal domain-like"/>
    <property type="match status" value="1"/>
</dbReference>
<dbReference type="SUPFAM" id="SSF51419">
    <property type="entry name" value="PLP-binding barrel"/>
    <property type="match status" value="1"/>
</dbReference>
<dbReference type="PROSITE" id="PS00395">
    <property type="entry name" value="ALANINE_RACEMASE"/>
    <property type="match status" value="1"/>
</dbReference>
<sequence length="358" mass="39357">MKPATAKISSLALKHNLELIHQKAPDSKMIAIVKANAYGHGVEFVASTVEEQVDGFGVARIEEALTLRSKGIIKPILLLEGFFSAKDLPVIAVNNIQTVVHNREQLEALKQTKLPNPIKVWLKIDTGMHRLGVALDEVEDYVEELKKCANVEPLIGYVSHFSRADELDSDYTRIQLNRFLQATEDKGGPRCIAASGGILFWPDSHLEWIRPGIIMYGVSPTDTPSSEFGLIPVMTLTSSLIAVRRHKAGEPVGYGGTWISKKDTKIGVIAIGYGDGYPRNIPSGTPVYINGRIVPIVGRVSMDMITVDLGEDCTDKVGDEVILWGKELPIETVAKHMGILSYELMTKLTPRVLTEYAD</sequence>
<reference key="1">
    <citation type="journal article" date="2010" name="BMC Genomics">
        <title>A genomic perspective on the potential of Actinobacillus succinogenes for industrial succinate production.</title>
        <authorList>
            <person name="McKinlay J.B."/>
            <person name="Laivenieks M."/>
            <person name="Schindler B.D."/>
            <person name="McKinlay A.A."/>
            <person name="Siddaramappa S."/>
            <person name="Challacombe J.F."/>
            <person name="Lowry S.R."/>
            <person name="Clum A."/>
            <person name="Lapidus A.L."/>
            <person name="Burkhart K.B."/>
            <person name="Harkins V."/>
            <person name="Vieille C."/>
        </authorList>
    </citation>
    <scope>NUCLEOTIDE SEQUENCE [LARGE SCALE GENOMIC DNA]</scope>
    <source>
        <strain>ATCC 55618 / DSM 22257 / CCUG 43843 / 130Z</strain>
    </source>
</reference>
<keyword id="KW-0413">Isomerase</keyword>
<keyword id="KW-0663">Pyridoxal phosphate</keyword>
<keyword id="KW-1185">Reference proteome</keyword>
<name>ALR_ACTSZ</name>
<feature type="chain" id="PRO_1000073092" description="Alanine racemase">
    <location>
        <begin position="1"/>
        <end position="358"/>
    </location>
</feature>
<feature type="active site" description="Proton acceptor; specific for D-alanine" evidence="1">
    <location>
        <position position="34"/>
    </location>
</feature>
<feature type="active site" description="Proton acceptor; specific for L-alanine" evidence="1">
    <location>
        <position position="254"/>
    </location>
</feature>
<feature type="binding site" evidence="1">
    <location>
        <position position="130"/>
    </location>
    <ligand>
        <name>substrate</name>
    </ligand>
</feature>
<feature type="binding site" evidence="1">
    <location>
        <position position="302"/>
    </location>
    <ligand>
        <name>substrate</name>
    </ligand>
</feature>
<feature type="modified residue" description="N6-(pyridoxal phosphate)lysine" evidence="1">
    <location>
        <position position="34"/>
    </location>
</feature>
<protein>
    <recommendedName>
        <fullName evidence="1">Alanine racemase</fullName>
        <ecNumber evidence="1">5.1.1.1</ecNumber>
    </recommendedName>
</protein>